<name>PDXH_RHOPA</name>
<reference key="1">
    <citation type="journal article" date="2004" name="Nat. Biotechnol.">
        <title>Complete genome sequence of the metabolically versatile photosynthetic bacterium Rhodopseudomonas palustris.</title>
        <authorList>
            <person name="Larimer F.W."/>
            <person name="Chain P."/>
            <person name="Hauser L."/>
            <person name="Lamerdin J.E."/>
            <person name="Malfatti S."/>
            <person name="Do L."/>
            <person name="Land M.L."/>
            <person name="Pelletier D.A."/>
            <person name="Beatty J.T."/>
            <person name="Lang A.S."/>
            <person name="Tabita F.R."/>
            <person name="Gibson J.L."/>
            <person name="Hanson T.E."/>
            <person name="Bobst C."/>
            <person name="Torres y Torres J.L."/>
            <person name="Peres C."/>
            <person name="Harrison F.H."/>
            <person name="Gibson J."/>
            <person name="Harwood C.S."/>
        </authorList>
    </citation>
    <scope>NUCLEOTIDE SEQUENCE [LARGE SCALE GENOMIC DNA]</scope>
    <source>
        <strain>ATCC BAA-98 / CGA009</strain>
    </source>
</reference>
<comment type="function">
    <text evidence="1">Catalyzes the oxidation of either pyridoxine 5'-phosphate (PNP) or pyridoxamine 5'-phosphate (PMP) into pyridoxal 5'-phosphate (PLP).</text>
</comment>
<comment type="catalytic activity">
    <reaction evidence="1">
        <text>pyridoxamine 5'-phosphate + O2 + H2O = pyridoxal 5'-phosphate + H2O2 + NH4(+)</text>
        <dbReference type="Rhea" id="RHEA:15817"/>
        <dbReference type="ChEBI" id="CHEBI:15377"/>
        <dbReference type="ChEBI" id="CHEBI:15379"/>
        <dbReference type="ChEBI" id="CHEBI:16240"/>
        <dbReference type="ChEBI" id="CHEBI:28938"/>
        <dbReference type="ChEBI" id="CHEBI:58451"/>
        <dbReference type="ChEBI" id="CHEBI:597326"/>
        <dbReference type="EC" id="1.4.3.5"/>
    </reaction>
</comment>
<comment type="catalytic activity">
    <reaction evidence="1">
        <text>pyridoxine 5'-phosphate + O2 = pyridoxal 5'-phosphate + H2O2</text>
        <dbReference type="Rhea" id="RHEA:15149"/>
        <dbReference type="ChEBI" id="CHEBI:15379"/>
        <dbReference type="ChEBI" id="CHEBI:16240"/>
        <dbReference type="ChEBI" id="CHEBI:58589"/>
        <dbReference type="ChEBI" id="CHEBI:597326"/>
        <dbReference type="EC" id="1.4.3.5"/>
    </reaction>
</comment>
<comment type="cofactor">
    <cofactor evidence="1">
        <name>FMN</name>
        <dbReference type="ChEBI" id="CHEBI:58210"/>
    </cofactor>
    <text evidence="1">Binds 1 FMN per subunit.</text>
</comment>
<comment type="pathway">
    <text evidence="1">Cofactor metabolism; pyridoxal 5'-phosphate salvage; pyridoxal 5'-phosphate from pyridoxamine 5'-phosphate: step 1/1.</text>
</comment>
<comment type="pathway">
    <text evidence="1">Cofactor metabolism; pyridoxal 5'-phosphate salvage; pyridoxal 5'-phosphate from pyridoxine 5'-phosphate: step 1/1.</text>
</comment>
<comment type="subunit">
    <text evidence="1">Homodimer.</text>
</comment>
<comment type="similarity">
    <text evidence="1">Belongs to the pyridoxamine 5'-phosphate oxidase family.</text>
</comment>
<dbReference type="EC" id="1.4.3.5" evidence="1"/>
<dbReference type="EMBL" id="BX572596">
    <property type="protein sequence ID" value="CAE26639.1"/>
    <property type="molecule type" value="Genomic_DNA"/>
</dbReference>
<dbReference type="RefSeq" id="WP_011156760.1">
    <property type="nucleotide sequence ID" value="NZ_CP116810.1"/>
</dbReference>
<dbReference type="SMR" id="Q6NAI9"/>
<dbReference type="STRING" id="258594.RPA1196"/>
<dbReference type="GeneID" id="66892219"/>
<dbReference type="eggNOG" id="COG0259">
    <property type="taxonomic scope" value="Bacteria"/>
</dbReference>
<dbReference type="HOGENOM" id="CLU_032263_2_3_5"/>
<dbReference type="PhylomeDB" id="Q6NAI9"/>
<dbReference type="UniPathway" id="UPA01068">
    <property type="reaction ID" value="UER00304"/>
</dbReference>
<dbReference type="UniPathway" id="UPA01068">
    <property type="reaction ID" value="UER00305"/>
</dbReference>
<dbReference type="GO" id="GO:0010181">
    <property type="term" value="F:FMN binding"/>
    <property type="evidence" value="ECO:0007669"/>
    <property type="project" value="UniProtKB-UniRule"/>
</dbReference>
<dbReference type="GO" id="GO:0004733">
    <property type="term" value="F:pyridoxamine phosphate oxidase activity"/>
    <property type="evidence" value="ECO:0007669"/>
    <property type="project" value="UniProtKB-UniRule"/>
</dbReference>
<dbReference type="GO" id="GO:0008615">
    <property type="term" value="P:pyridoxine biosynthetic process"/>
    <property type="evidence" value="ECO:0007669"/>
    <property type="project" value="UniProtKB-KW"/>
</dbReference>
<dbReference type="FunFam" id="2.30.110.10:FF:000012">
    <property type="entry name" value="Predicted protein"/>
    <property type="match status" value="1"/>
</dbReference>
<dbReference type="Gene3D" id="2.30.110.10">
    <property type="entry name" value="Electron Transport, Fmn-binding Protein, Chain A"/>
    <property type="match status" value="1"/>
</dbReference>
<dbReference type="HAMAP" id="MF_01629">
    <property type="entry name" value="PdxH"/>
    <property type="match status" value="1"/>
</dbReference>
<dbReference type="InterPro" id="IPR000659">
    <property type="entry name" value="Pyridox_Oxase"/>
</dbReference>
<dbReference type="InterPro" id="IPR019740">
    <property type="entry name" value="Pyridox_Oxase_CS"/>
</dbReference>
<dbReference type="InterPro" id="IPR011576">
    <property type="entry name" value="Pyridox_Oxase_N"/>
</dbReference>
<dbReference type="InterPro" id="IPR019576">
    <property type="entry name" value="Pyridoxamine_oxidase_dimer_C"/>
</dbReference>
<dbReference type="InterPro" id="IPR012349">
    <property type="entry name" value="Split_barrel_FMN-bd"/>
</dbReference>
<dbReference type="NCBIfam" id="TIGR00558">
    <property type="entry name" value="pdxH"/>
    <property type="match status" value="1"/>
</dbReference>
<dbReference type="NCBIfam" id="NF004231">
    <property type="entry name" value="PRK05679.1"/>
    <property type="match status" value="1"/>
</dbReference>
<dbReference type="PANTHER" id="PTHR10851:SF0">
    <property type="entry name" value="PYRIDOXINE-5'-PHOSPHATE OXIDASE"/>
    <property type="match status" value="1"/>
</dbReference>
<dbReference type="PANTHER" id="PTHR10851">
    <property type="entry name" value="PYRIDOXINE-5-PHOSPHATE OXIDASE"/>
    <property type="match status" value="1"/>
</dbReference>
<dbReference type="Pfam" id="PF10590">
    <property type="entry name" value="PNP_phzG_C"/>
    <property type="match status" value="1"/>
</dbReference>
<dbReference type="Pfam" id="PF01243">
    <property type="entry name" value="PNPOx_N"/>
    <property type="match status" value="1"/>
</dbReference>
<dbReference type="PIRSF" id="PIRSF000190">
    <property type="entry name" value="Pyd_amn-ph_oxd"/>
    <property type="match status" value="1"/>
</dbReference>
<dbReference type="SUPFAM" id="SSF50475">
    <property type="entry name" value="FMN-binding split barrel"/>
    <property type="match status" value="1"/>
</dbReference>
<dbReference type="PROSITE" id="PS01064">
    <property type="entry name" value="PYRIDOX_OXIDASE"/>
    <property type="match status" value="1"/>
</dbReference>
<feature type="chain" id="PRO_0000167749" description="Pyridoxine/pyridoxamine 5'-phosphate oxidase">
    <location>
        <begin position="1"/>
        <end position="212"/>
    </location>
</feature>
<feature type="binding site" evidence="1">
    <location>
        <begin position="59"/>
        <end position="64"/>
    </location>
    <ligand>
        <name>FMN</name>
        <dbReference type="ChEBI" id="CHEBI:58210"/>
    </ligand>
</feature>
<feature type="binding site" evidence="1">
    <location>
        <position position="64"/>
    </location>
    <ligand>
        <name>substrate</name>
    </ligand>
</feature>
<feature type="binding site" evidence="1">
    <location>
        <begin position="74"/>
        <end position="75"/>
    </location>
    <ligand>
        <name>FMN</name>
        <dbReference type="ChEBI" id="CHEBI:58210"/>
    </ligand>
</feature>
<feature type="binding site" evidence="1">
    <location>
        <position position="81"/>
    </location>
    <ligand>
        <name>FMN</name>
        <dbReference type="ChEBI" id="CHEBI:58210"/>
    </ligand>
</feature>
<feature type="binding site" evidence="1">
    <location>
        <position position="103"/>
    </location>
    <ligand>
        <name>FMN</name>
        <dbReference type="ChEBI" id="CHEBI:58210"/>
    </ligand>
</feature>
<feature type="binding site" evidence="1">
    <location>
        <position position="121"/>
    </location>
    <ligand>
        <name>substrate</name>
    </ligand>
</feature>
<feature type="binding site" evidence="1">
    <location>
        <position position="125"/>
    </location>
    <ligand>
        <name>substrate</name>
    </ligand>
</feature>
<feature type="binding site" evidence="1">
    <location>
        <begin position="138"/>
        <end position="139"/>
    </location>
    <ligand>
        <name>FMN</name>
        <dbReference type="ChEBI" id="CHEBI:58210"/>
    </ligand>
</feature>
<feature type="binding site" evidence="1">
    <location>
        <position position="183"/>
    </location>
    <ligand>
        <name>FMN</name>
        <dbReference type="ChEBI" id="CHEBI:58210"/>
    </ligand>
</feature>
<feature type="binding site" evidence="1">
    <location>
        <begin position="189"/>
        <end position="191"/>
    </location>
    <ligand>
        <name>substrate</name>
    </ligand>
</feature>
<feature type="binding site" evidence="1">
    <location>
        <position position="193"/>
    </location>
    <ligand>
        <name>FMN</name>
        <dbReference type="ChEBI" id="CHEBI:58210"/>
    </ligand>
</feature>
<accession>Q6NAI9</accession>
<keyword id="KW-0285">Flavoprotein</keyword>
<keyword id="KW-0288">FMN</keyword>
<keyword id="KW-0560">Oxidoreductase</keyword>
<keyword id="KW-0664">Pyridoxine biosynthesis</keyword>
<proteinExistence type="inferred from homology"/>
<evidence type="ECO:0000255" key="1">
    <source>
        <dbReference type="HAMAP-Rule" id="MF_01629"/>
    </source>
</evidence>
<protein>
    <recommendedName>
        <fullName evidence="1">Pyridoxine/pyridoxamine 5'-phosphate oxidase</fullName>
        <ecNumber evidence="1">1.4.3.5</ecNumber>
    </recommendedName>
    <alternativeName>
        <fullName evidence="1">PNP/PMP oxidase</fullName>
        <shortName evidence="1">PNPOx</shortName>
    </alternativeName>
    <alternativeName>
        <fullName evidence="1">Pyridoxal 5'-phosphate synthase</fullName>
    </alternativeName>
</protein>
<sequence length="212" mass="24203">MSDPTIRPQSELTPGDFTAAENPFALFAEWLAEANKSEPNDPNAMALATVDPDGLPDVRMVLMKGYDEHGFVFYSHIASQKGRELAANPKAALLFHWKSLRRQIRIRGTVTPVTDTEADAYFATRPKQAQIGAWASKQSQPLESRFAFEQAIAKVTARHLIGDVPRPPGWSGWRITPSRIEFWHDRPFRLHDRIEFRRDTPDHPWTKTRLYP</sequence>
<gene>
    <name evidence="1" type="primary">pdxH</name>
    <name type="ordered locus">RPA1196</name>
</gene>
<organism>
    <name type="scientific">Rhodopseudomonas palustris (strain ATCC BAA-98 / CGA009)</name>
    <dbReference type="NCBI Taxonomy" id="258594"/>
    <lineage>
        <taxon>Bacteria</taxon>
        <taxon>Pseudomonadati</taxon>
        <taxon>Pseudomonadota</taxon>
        <taxon>Alphaproteobacteria</taxon>
        <taxon>Hyphomicrobiales</taxon>
        <taxon>Nitrobacteraceae</taxon>
        <taxon>Rhodopseudomonas</taxon>
    </lineage>
</organism>